<dbReference type="EMBL" id="CP000407">
    <property type="protein sequence ID" value="ABP89040.1"/>
    <property type="molecule type" value="Genomic_DNA"/>
</dbReference>
<dbReference type="STRING" id="391295.SSU05_0068"/>
<dbReference type="KEGG" id="ssu:SSU05_0068"/>
<dbReference type="eggNOG" id="COG3906">
    <property type="taxonomic scope" value="Bacteria"/>
</dbReference>
<dbReference type="HOGENOM" id="CLU_146610_2_1_9"/>
<dbReference type="BioCyc" id="SSUI391295:GHI8-86-MONOMER"/>
<dbReference type="HAMAP" id="MF_01448">
    <property type="entry name" value="UPF0473"/>
    <property type="match status" value="1"/>
</dbReference>
<dbReference type="InterPro" id="IPR009711">
    <property type="entry name" value="UPF0473"/>
</dbReference>
<dbReference type="NCBIfam" id="NF010215">
    <property type="entry name" value="PRK13678.1-2"/>
    <property type="match status" value="1"/>
</dbReference>
<dbReference type="NCBIfam" id="NF010217">
    <property type="entry name" value="PRK13678.1-4"/>
    <property type="match status" value="1"/>
</dbReference>
<dbReference type="PANTHER" id="PTHR40066">
    <property type="entry name" value="UPF0473 PROTEIN CBO2561/CLC_2432"/>
    <property type="match status" value="1"/>
</dbReference>
<dbReference type="PANTHER" id="PTHR40066:SF1">
    <property type="entry name" value="UPF0473 PROTEIN CBO2561_CLC_2432"/>
    <property type="match status" value="1"/>
</dbReference>
<dbReference type="Pfam" id="PF06949">
    <property type="entry name" value="DUF1292"/>
    <property type="match status" value="1"/>
</dbReference>
<evidence type="ECO:0000255" key="1">
    <source>
        <dbReference type="HAMAP-Rule" id="MF_01448"/>
    </source>
</evidence>
<feature type="chain" id="PRO_0000304870" description="UPF0473 protein SSU05_0068">
    <location>
        <begin position="1"/>
        <end position="106"/>
    </location>
</feature>
<proteinExistence type="inferred from homology"/>
<reference key="1">
    <citation type="journal article" date="2007" name="PLoS ONE">
        <title>A glimpse of streptococcal toxic shock syndrome from comparative genomics of S. suis 2 Chinese isolates.</title>
        <authorList>
            <person name="Chen C."/>
            <person name="Tang J."/>
            <person name="Dong W."/>
            <person name="Wang C."/>
            <person name="Feng Y."/>
            <person name="Wang J."/>
            <person name="Zheng F."/>
            <person name="Pan X."/>
            <person name="Liu D."/>
            <person name="Li M."/>
            <person name="Song Y."/>
            <person name="Zhu X."/>
            <person name="Sun H."/>
            <person name="Feng T."/>
            <person name="Guo Z."/>
            <person name="Ju A."/>
            <person name="Ge J."/>
            <person name="Dong Y."/>
            <person name="Sun W."/>
            <person name="Jiang Y."/>
            <person name="Wang J."/>
            <person name="Yan J."/>
            <person name="Yang H."/>
            <person name="Wang X."/>
            <person name="Gao G.F."/>
            <person name="Yang R."/>
            <person name="Wang J."/>
            <person name="Yu J."/>
        </authorList>
    </citation>
    <scope>NUCLEOTIDE SEQUENCE [LARGE SCALE GENOMIC DNA]</scope>
    <source>
        <strain>05ZYH33</strain>
    </source>
</reference>
<accession>A4VSF1</accession>
<comment type="similarity">
    <text evidence="1">Belongs to the UPF0473 family.</text>
</comment>
<name>Y068_STRSY</name>
<sequence length="106" mass="12257">MAHHHDHEHDHNHDERELITLVDDQGNETLFEILLTIDGQEEFGKNYVLLIPASAEEDENGEVEIQAYSYIENENGTEGDLQPIPEDATAEWDMIEEVFNSFMEEE</sequence>
<protein>
    <recommendedName>
        <fullName evidence="1">UPF0473 protein SSU05_0068</fullName>
    </recommendedName>
</protein>
<gene>
    <name type="ordered locus">SSU05_0068</name>
</gene>
<organism>
    <name type="scientific">Streptococcus suis (strain 05ZYH33)</name>
    <dbReference type="NCBI Taxonomy" id="391295"/>
    <lineage>
        <taxon>Bacteria</taxon>
        <taxon>Bacillati</taxon>
        <taxon>Bacillota</taxon>
        <taxon>Bacilli</taxon>
        <taxon>Lactobacillales</taxon>
        <taxon>Streptococcaceae</taxon>
        <taxon>Streptococcus</taxon>
    </lineage>
</organism>